<sequence length="449" mass="46731">MSTRRTAAALLAAAAVAVGGLTALTTTAAQAAPGCRVDYAVTNQWPGGFGANVTITNLGDPVSSWKLDWTYTAGQRIQQLWNGTASTNGGQVSVTSLPWNGSIPTGGTASFGFNGSWAGSNPTPASFSLNGTTCTGTVPTTSPTPTPTPTTPTPTPTPTPTPTPTVTPQPTSGFYVDPTTQGYRAWQAASGTDKALLEKIALTPQAYWVGNWADASHAQAEVADYTGRAVAAGKTPMLVVYAIPGRDCGSHSGGGVSESEYARWVDTVAQGIKGNPIVILEPDALAQLGDCSGQGDRVGFLKYAAKSLTLKGARVYIDAGHAKWLSVDTPVNRLNQVGFEYAVGFALNTSNYQTTADSKAYGQQISQRLGGKKFVIDTSRNGNGSNGEWCNPRGRALGERPVAVNDGSGLDALLWVKLPGESDGACNGGPAAGQWWQEIALEMARNARW</sequence>
<feature type="signal peptide" description="Tat-type signal" evidence="1">
    <location>
        <begin position="1"/>
        <end position="31"/>
    </location>
</feature>
<feature type="chain" id="PRO_0000007903" description="Endoglucanase A">
    <location>
        <begin position="32"/>
        <end position="449"/>
    </location>
</feature>
<feature type="domain" description="CBM2" evidence="2">
    <location>
        <begin position="32"/>
        <end position="137"/>
    </location>
</feature>
<feature type="region of interest" description="Disordered" evidence="5">
    <location>
        <begin position="127"/>
        <end position="170"/>
    </location>
</feature>
<feature type="region of interest" description="Linker ('hinge') (Pro-Thr box)">
    <location>
        <begin position="139"/>
        <end position="168"/>
    </location>
</feature>
<feature type="region of interest" description="Catalytic">
    <location>
        <begin position="438"/>
        <end position="449"/>
    </location>
</feature>
<feature type="compositionally biased region" description="Low complexity" evidence="5">
    <location>
        <begin position="132"/>
        <end position="141"/>
    </location>
</feature>
<feature type="compositionally biased region" description="Pro residues" evidence="5">
    <location>
        <begin position="142"/>
        <end position="167"/>
    </location>
</feature>
<feature type="active site" evidence="3">
    <location>
        <position position="247"/>
    </location>
</feature>
<feature type="active site" description="Proton donor" evidence="4">
    <location>
        <position position="283"/>
    </location>
</feature>
<feature type="active site" description="Nucleophile" evidence="3">
    <location>
        <position position="423"/>
    </location>
</feature>
<feature type="disulfide bond" evidence="6">
    <location>
        <begin position="35"/>
        <end position="134"/>
    </location>
</feature>
<feature type="disulfide bond" evidence="6">
    <location>
        <begin position="248"/>
        <end position="291"/>
    </location>
</feature>
<feature type="disulfide bond" evidence="6">
    <location>
        <begin position="390"/>
        <end position="426"/>
    </location>
</feature>
<accession>P07984</accession>
<dbReference type="EC" id="3.2.1.4"/>
<dbReference type="EMBL" id="M15823">
    <property type="protein sequence ID" value="AAA23084.1"/>
    <property type="molecule type" value="Genomic_DNA"/>
</dbReference>
<dbReference type="PIR" id="A24993">
    <property type="entry name" value="A24993"/>
</dbReference>
<dbReference type="SMR" id="P07984"/>
<dbReference type="CAZy" id="CBM2">
    <property type="family name" value="Carbohydrate-Binding Module Family 2"/>
</dbReference>
<dbReference type="CAZy" id="GH6">
    <property type="family name" value="Glycoside Hydrolase Family 6"/>
</dbReference>
<dbReference type="SABIO-RK" id="P07984"/>
<dbReference type="GO" id="GO:0008810">
    <property type="term" value="F:cellulase activity"/>
    <property type="evidence" value="ECO:0007669"/>
    <property type="project" value="UniProtKB-EC"/>
</dbReference>
<dbReference type="GO" id="GO:0030247">
    <property type="term" value="F:polysaccharide binding"/>
    <property type="evidence" value="ECO:0007669"/>
    <property type="project" value="InterPro"/>
</dbReference>
<dbReference type="GO" id="GO:0030245">
    <property type="term" value="P:cellulose catabolic process"/>
    <property type="evidence" value="ECO:0007669"/>
    <property type="project" value="UniProtKB-KW"/>
</dbReference>
<dbReference type="Gene3D" id="2.60.40.290">
    <property type="match status" value="1"/>
</dbReference>
<dbReference type="Gene3D" id="3.20.20.40">
    <property type="entry name" value="1, 4-beta cellobiohydrolase"/>
    <property type="match status" value="1"/>
</dbReference>
<dbReference type="InterPro" id="IPR016288">
    <property type="entry name" value="Beta_cellobiohydrolase"/>
</dbReference>
<dbReference type="InterPro" id="IPR036434">
    <property type="entry name" value="Beta_cellobiohydrolase_sf"/>
</dbReference>
<dbReference type="InterPro" id="IPR001919">
    <property type="entry name" value="CBD2"/>
</dbReference>
<dbReference type="InterPro" id="IPR008965">
    <property type="entry name" value="CBM2/CBM3_carb-bd_dom_sf"/>
</dbReference>
<dbReference type="InterPro" id="IPR012291">
    <property type="entry name" value="CBM2_carb-bd_dom_sf"/>
</dbReference>
<dbReference type="InterPro" id="IPR018366">
    <property type="entry name" value="CBM2_CS"/>
</dbReference>
<dbReference type="InterPro" id="IPR001524">
    <property type="entry name" value="Glyco_hydro_6_CS"/>
</dbReference>
<dbReference type="InterPro" id="IPR006311">
    <property type="entry name" value="TAT_signal"/>
</dbReference>
<dbReference type="PANTHER" id="PTHR34876">
    <property type="match status" value="1"/>
</dbReference>
<dbReference type="PANTHER" id="PTHR34876:SF4">
    <property type="entry name" value="1,4-BETA-D-GLUCAN CELLOBIOHYDROLASE C-RELATED"/>
    <property type="match status" value="1"/>
</dbReference>
<dbReference type="Pfam" id="PF00553">
    <property type="entry name" value="CBM_2"/>
    <property type="match status" value="1"/>
</dbReference>
<dbReference type="Pfam" id="PF01341">
    <property type="entry name" value="Glyco_hydro_6"/>
    <property type="match status" value="1"/>
</dbReference>
<dbReference type="PIRSF" id="PIRSF001100">
    <property type="entry name" value="Beta_cellobiohydrolase"/>
    <property type="match status" value="1"/>
</dbReference>
<dbReference type="PRINTS" id="PR00733">
    <property type="entry name" value="GLHYDRLASE6"/>
</dbReference>
<dbReference type="SMART" id="SM00637">
    <property type="entry name" value="CBD_II"/>
    <property type="match status" value="1"/>
</dbReference>
<dbReference type="SUPFAM" id="SSF49384">
    <property type="entry name" value="Carbohydrate-binding domain"/>
    <property type="match status" value="1"/>
</dbReference>
<dbReference type="SUPFAM" id="SSF51989">
    <property type="entry name" value="Glycosyl hydrolases family 6, cellulases"/>
    <property type="match status" value="1"/>
</dbReference>
<dbReference type="PROSITE" id="PS51173">
    <property type="entry name" value="CBM2"/>
    <property type="match status" value="1"/>
</dbReference>
<dbReference type="PROSITE" id="PS00561">
    <property type="entry name" value="CBM2_A"/>
    <property type="match status" value="1"/>
</dbReference>
<dbReference type="PROSITE" id="PS00655">
    <property type="entry name" value="GLYCOSYL_HYDROL_F6_1"/>
    <property type="match status" value="1"/>
</dbReference>
<dbReference type="PROSITE" id="PS00656">
    <property type="entry name" value="GLYCOSYL_HYDROL_F6_2"/>
    <property type="match status" value="1"/>
</dbReference>
<dbReference type="PROSITE" id="PS51318">
    <property type="entry name" value="TAT"/>
    <property type="match status" value="1"/>
</dbReference>
<organism>
    <name type="scientific">Cellulomonas fimi</name>
    <dbReference type="NCBI Taxonomy" id="1708"/>
    <lineage>
        <taxon>Bacteria</taxon>
        <taxon>Bacillati</taxon>
        <taxon>Actinomycetota</taxon>
        <taxon>Actinomycetes</taxon>
        <taxon>Micrococcales</taxon>
        <taxon>Cellulomonadaceae</taxon>
        <taxon>Cellulomonas</taxon>
    </lineage>
</organism>
<keyword id="KW-0119">Carbohydrate metabolism</keyword>
<keyword id="KW-0136">Cellulose degradation</keyword>
<keyword id="KW-1015">Disulfide bond</keyword>
<keyword id="KW-0326">Glycosidase</keyword>
<keyword id="KW-0378">Hydrolase</keyword>
<keyword id="KW-0624">Polysaccharide degradation</keyword>
<keyword id="KW-0732">Signal</keyword>
<reference key="1">
    <citation type="journal article" date="1986" name="Gene">
        <title>Characterization and structure of an endoglucanase gene cenA of Cellulomonas fimi.</title>
        <authorList>
            <person name="Wong W.K.R."/>
            <person name="Gerhard B."/>
            <person name="Guo Z.M."/>
            <person name="Kilburn D.G."/>
            <person name="Warren R.A.J."/>
            <person name="Miller R.C. Jr."/>
        </authorList>
    </citation>
    <scope>NUCLEOTIDE SEQUENCE [GENOMIC DNA]</scope>
</reference>
<reference key="2">
    <citation type="journal article" date="1989" name="J. Biol. Chem.">
        <title>Structural and functional analysis of a bacterial cellulase by proteolysis.</title>
        <authorList>
            <person name="Gilkes N.R."/>
            <person name="Kilburn D.G."/>
            <person name="Miller R.C. Jr."/>
            <person name="Warren R.A.J."/>
        </authorList>
    </citation>
    <scope>DOMAINS</scope>
</reference>
<reference key="3">
    <citation type="journal article" date="1991" name="Eur. J. Biochem.">
        <title>Structural and functional relationships in two families of beta-1,4-glycanases.</title>
        <authorList>
            <person name="Gilkes N.R."/>
            <person name="Claeyssens M."/>
            <person name="Aebersold R."/>
            <person name="Henrissat B."/>
            <person name="Meinke A."/>
            <person name="Morrison H.D."/>
            <person name="Kilburn D.G."/>
            <person name="Warren R.A.J."/>
            <person name="Miller R.C. Jr."/>
        </authorList>
    </citation>
    <scope>DISULFIDE BONDS</scope>
</reference>
<comment type="function">
    <text>The biological conversion of cellulose to glucose generally requires three types of hydrolytic enzymes: (1) Endoglucanases which cut internal beta-1,4-glucosidic bonds; (2) Exocellobiohydrolases that cut the disaccharide cellobiose from the non-reducing end of the cellulose polymer chain; (3) Beta-1,4-glucosidases which hydrolyze the cellobiose and other short cello-oligosaccharides to glucose.</text>
</comment>
<comment type="catalytic activity">
    <reaction>
        <text>Endohydrolysis of (1-&gt;4)-beta-D-glucosidic linkages in cellulose, lichenin and cereal beta-D-glucans.</text>
        <dbReference type="EC" id="3.2.1.4"/>
    </reaction>
</comment>
<comment type="PTM">
    <text>The linker region (also termed 'hinge') may be a potential site for proteolysis.</text>
</comment>
<comment type="PTM">
    <text>Predicted to be exported by the Tat system. The position of the signal peptide cleavage has not been experimentally proven.</text>
</comment>
<comment type="similarity">
    <text evidence="7">Belongs to the glycosyl hydrolase 6 (cellulase B) family.</text>
</comment>
<proteinExistence type="evidence at protein level"/>
<name>GUNA_CELFI</name>
<protein>
    <recommendedName>
        <fullName>Endoglucanase A</fullName>
        <ecNumber>3.2.1.4</ecNumber>
    </recommendedName>
    <alternativeName>
        <fullName>Cellulase A</fullName>
    </alternativeName>
    <alternativeName>
        <fullName>Endo-1,4-beta-glucanase A</fullName>
    </alternativeName>
</protein>
<gene>
    <name type="primary">cenA</name>
</gene>
<evidence type="ECO:0000255" key="1">
    <source>
        <dbReference type="PROSITE-ProRule" id="PRU00648"/>
    </source>
</evidence>
<evidence type="ECO:0000255" key="2">
    <source>
        <dbReference type="PROSITE-ProRule" id="PRU01135"/>
    </source>
</evidence>
<evidence type="ECO:0000255" key="3">
    <source>
        <dbReference type="PROSITE-ProRule" id="PRU10056"/>
    </source>
</evidence>
<evidence type="ECO:0000255" key="4">
    <source>
        <dbReference type="PROSITE-ProRule" id="PRU10057"/>
    </source>
</evidence>
<evidence type="ECO:0000256" key="5">
    <source>
        <dbReference type="SAM" id="MobiDB-lite"/>
    </source>
</evidence>
<evidence type="ECO:0000269" key="6">
    <source>
    </source>
</evidence>
<evidence type="ECO:0000305" key="7"/>